<comment type="function">
    <text evidence="1">DNA nicking enzyme that cleaves extruded cruciform DNA at its tip. Probably nicks viral hairpins.</text>
</comment>
<comment type="subcellular location">
    <subcellularLocation>
        <location>Virion</location>
    </subcellularLocation>
    <text evidence="1">Virion core.</text>
</comment>
<comment type="induction">
    <text evidence="1">Expressed in the intermediate phase of the viral replicative cycle.</text>
</comment>
<comment type="similarity">
    <text evidence="2">Belongs to the orthopoxvirus OPG042 family.</text>
</comment>
<proteinExistence type="inferred from homology"/>
<sequence>MNPDNTIAVITETIPIGMQFDKVYLTTFNMWREILSNTIKTLDISSFYWSLSDEVGTNFGTVILNEIVQLPKRGVRVRVAVNKSNKPLKDVERLQMAGVEVRYIDITNILGGVLHTKFWISDNTHIYLGSANMDWRSLTQVKELGIAIFNNRNLAADLTQIFEVYWYLGVNNLPYNWKNFYPSYYNTDHPLSINVSGVPHSVFIASAPQQLCTMERTNDLTALLSCIGNASKFVYVSVMNFIPIIYSKAGKILFWPYIEDELRRSAIDRQVSVKLLISCWQRSSFIMRNFLRSIAMLKSKNIDIEVKLFIVPDADPPIPYSRVNHAKYMVTDKTAYIGTSNWTGNYFTDICGASINITPDDGLGLRQQLEDIFIRDWNSKYSYELYDTSPTKRCRLLKNMKQCTNDIYCDEIQPEKELPEYSLE</sequence>
<dbReference type="EMBL" id="MT903340">
    <property type="protein sequence ID" value="QNP12898.1"/>
    <property type="molecule type" value="Genomic_DNA"/>
</dbReference>
<dbReference type="RefSeq" id="YP_010377025.1">
    <property type="nucleotide sequence ID" value="NC_063383.1"/>
</dbReference>
<dbReference type="SMR" id="A0A7H0DN15"/>
<dbReference type="GeneID" id="72551438"/>
<dbReference type="Proteomes" id="UP000516359">
    <property type="component" value="Genome"/>
</dbReference>
<dbReference type="GO" id="GO:0019031">
    <property type="term" value="C:viral envelope"/>
    <property type="evidence" value="ECO:0007669"/>
    <property type="project" value="UniProtKB-KW"/>
</dbReference>
<dbReference type="GO" id="GO:0004519">
    <property type="term" value="F:endonuclease activity"/>
    <property type="evidence" value="ECO:0007669"/>
    <property type="project" value="UniProtKB-KW"/>
</dbReference>
<dbReference type="CDD" id="cd09107">
    <property type="entry name" value="PLDc_vPLD3_4_5_like_2"/>
    <property type="match status" value="1"/>
</dbReference>
<dbReference type="Gene3D" id="3.30.870.10">
    <property type="entry name" value="Endonuclease Chain A"/>
    <property type="match status" value="2"/>
</dbReference>
<dbReference type="InterPro" id="IPR050874">
    <property type="entry name" value="Diverse_PLD-related"/>
</dbReference>
<dbReference type="InterPro" id="IPR032803">
    <property type="entry name" value="PLDc_3"/>
</dbReference>
<dbReference type="InterPro" id="IPR001736">
    <property type="entry name" value="PLipase_D/transphosphatidylase"/>
</dbReference>
<dbReference type="PANTHER" id="PTHR10185:SF16">
    <property type="entry name" value="5'-3' EXONUCLEASE PLD3"/>
    <property type="match status" value="1"/>
</dbReference>
<dbReference type="PANTHER" id="PTHR10185">
    <property type="entry name" value="PHOSPHOLIPASE D - RELATED"/>
    <property type="match status" value="1"/>
</dbReference>
<dbReference type="Pfam" id="PF00614">
    <property type="entry name" value="PLDc"/>
    <property type="match status" value="1"/>
</dbReference>
<dbReference type="Pfam" id="PF13918">
    <property type="entry name" value="PLDc_3"/>
    <property type="match status" value="1"/>
</dbReference>
<dbReference type="SMART" id="SM00155">
    <property type="entry name" value="PLDc"/>
    <property type="match status" value="2"/>
</dbReference>
<dbReference type="SUPFAM" id="SSF56024">
    <property type="entry name" value="Phospholipase D/nuclease"/>
    <property type="match status" value="2"/>
</dbReference>
<dbReference type="PROSITE" id="PS50035">
    <property type="entry name" value="PLD"/>
    <property type="match status" value="2"/>
</dbReference>
<organismHost>
    <name type="scientific">Cynomys gunnisoni</name>
    <name type="common">Gunnison's prairie dog</name>
    <name type="synonym">Spermophilus gunnisoni</name>
    <dbReference type="NCBI Taxonomy" id="45479"/>
</organismHost>
<organismHost>
    <name type="scientific">Cynomys leucurus</name>
    <name type="common">White-tailed prairie dog</name>
    <dbReference type="NCBI Taxonomy" id="99825"/>
</organismHost>
<organismHost>
    <name type="scientific">Cynomys ludovicianus</name>
    <name type="common">Black-tailed prairie dog</name>
    <dbReference type="NCBI Taxonomy" id="45480"/>
</organismHost>
<organismHost>
    <name type="scientific">Cynomys mexicanus</name>
    <name type="common">Mexican prairie dog</name>
    <dbReference type="NCBI Taxonomy" id="99826"/>
</organismHost>
<organismHost>
    <name type="scientific">Cynomys parvidens</name>
    <name type="common">Utah prairie dog</name>
    <dbReference type="NCBI Taxonomy" id="99827"/>
</organismHost>
<organismHost>
    <name type="scientific">Gliridae</name>
    <name type="common">dormice</name>
    <dbReference type="NCBI Taxonomy" id="30650"/>
</organismHost>
<organismHost>
    <name type="scientific">Heliosciurus ruwenzorii</name>
    <name type="common">Ruwenzori sun squirrel</name>
    <dbReference type="NCBI Taxonomy" id="226685"/>
</organismHost>
<organismHost>
    <name type="scientific">Homo sapiens</name>
    <name type="common">Human</name>
    <dbReference type="NCBI Taxonomy" id="9606"/>
</organismHost>
<organismHost>
    <name type="scientific">Mus musculus</name>
    <name type="common">Mouse</name>
    <dbReference type="NCBI Taxonomy" id="10090"/>
</organismHost>
<keyword id="KW-0255">Endonuclease</keyword>
<keyword id="KW-0378">Hydrolase</keyword>
<keyword id="KW-0540">Nuclease</keyword>
<keyword id="KW-1185">Reference proteome</keyword>
<keyword id="KW-0677">Repeat</keyword>
<keyword id="KW-0261">Viral envelope protein</keyword>
<keyword id="KW-0946">Virion</keyword>
<gene>
    <name type="primary">OPG042</name>
    <name type="ORF">C4L</name>
    <name type="ORF">MPXVgp030</name>
</gene>
<reference key="1">
    <citation type="journal article" date="2022" name="J. Infect. Dis.">
        <title>Exportation of Monkeypox virus from the African continent.</title>
        <authorList>
            <person name="Mauldin M.R."/>
            <person name="McCollum A.M."/>
            <person name="Nakazawa Y.J."/>
            <person name="Mandra A."/>
            <person name="Whitehouse E.R."/>
            <person name="Davidson W."/>
            <person name="Zhao H."/>
            <person name="Gao J."/>
            <person name="Li Y."/>
            <person name="Doty J."/>
            <person name="Yinka-Ogunleye A."/>
            <person name="Akinpelu A."/>
            <person name="Aruna O."/>
            <person name="Naidoo D."/>
            <person name="Lewandowski K."/>
            <person name="Afrough B."/>
            <person name="Graham V."/>
            <person name="Aarons E."/>
            <person name="Hewson R."/>
            <person name="Vipond R."/>
            <person name="Dunning J."/>
            <person name="Chand M."/>
            <person name="Brown C."/>
            <person name="Cohen-Gihon I."/>
            <person name="Erez N."/>
            <person name="Shifman O."/>
            <person name="Israeli O."/>
            <person name="Sharon M."/>
            <person name="Schwartz E."/>
            <person name="Beth-Din A."/>
            <person name="Zvi A."/>
            <person name="Mak T.M."/>
            <person name="Ng Y.K."/>
            <person name="Cui L."/>
            <person name="Lin R.T.P."/>
            <person name="Olson V.A."/>
            <person name="Brooks T."/>
            <person name="Paran N."/>
            <person name="Ihekweazu C."/>
            <person name="Reynolds M.G."/>
        </authorList>
    </citation>
    <scope>NUCLEOTIDE SEQUENCE [LARGE SCALE GENOMIC DNA]</scope>
    <source>
        <strain>MPXV-M5312_HM12_Rivers</strain>
    </source>
</reference>
<protein>
    <recommendedName>
        <fullName>Virion nicking-joining enzyme</fullName>
    </recommendedName>
    <alternativeName>
        <fullName>Phospholipase-D-like protein K4</fullName>
    </alternativeName>
</protein>
<evidence type="ECO:0000250" key="1">
    <source>
        <dbReference type="UniProtKB" id="P18377"/>
    </source>
</evidence>
<evidence type="ECO:0000305" key="2"/>
<organism>
    <name type="scientific">Monkeypox virus</name>
    <dbReference type="NCBI Taxonomy" id="10244"/>
    <lineage>
        <taxon>Viruses</taxon>
        <taxon>Varidnaviria</taxon>
        <taxon>Bamfordvirae</taxon>
        <taxon>Nucleocytoviricota</taxon>
        <taxon>Pokkesviricetes</taxon>
        <taxon>Chitovirales</taxon>
        <taxon>Poxviridae</taxon>
        <taxon>Chordopoxvirinae</taxon>
        <taxon>Orthopoxvirus</taxon>
    </lineage>
</organism>
<name>PG042_MONPV</name>
<accession>A0A7H0DN15</accession>
<feature type="chain" id="PRO_0000457205" description="Virion nicking-joining enzyme">
    <location>
        <begin position="1"/>
        <end position="424"/>
    </location>
</feature>